<proteinExistence type="inferred from homology"/>
<feature type="chain" id="PRO_0000226502" description="Small ribosomal subunit protein uS7">
    <location>
        <begin position="1"/>
        <end position="156"/>
    </location>
</feature>
<organism>
    <name type="scientific">Geobacter metallireducens (strain ATCC 53774 / DSM 7210 / GS-15)</name>
    <dbReference type="NCBI Taxonomy" id="269799"/>
    <lineage>
        <taxon>Bacteria</taxon>
        <taxon>Pseudomonadati</taxon>
        <taxon>Thermodesulfobacteriota</taxon>
        <taxon>Desulfuromonadia</taxon>
        <taxon>Geobacterales</taxon>
        <taxon>Geobacteraceae</taxon>
        <taxon>Geobacter</taxon>
    </lineage>
</organism>
<sequence>MPRRREVAKRVILPDPKFNDRVVAKLVNVIMVGGKKSTAERALYGALEVVSQKTGEEAVKVLKKCLDNIKPTLEVKSRRVGGSTYQVPVEVRADRRVSLAMRWLVKYANDRSEKTVTDKLAGEILDVYNNRGAAVKKREDTHRMAEANRAFAHYRW</sequence>
<keyword id="KW-1185">Reference proteome</keyword>
<keyword id="KW-0687">Ribonucleoprotein</keyword>
<keyword id="KW-0689">Ribosomal protein</keyword>
<keyword id="KW-0694">RNA-binding</keyword>
<keyword id="KW-0699">rRNA-binding</keyword>
<keyword id="KW-0820">tRNA-binding</keyword>
<dbReference type="EMBL" id="CP000148">
    <property type="protein sequence ID" value="ABB30864.1"/>
    <property type="molecule type" value="Genomic_DNA"/>
</dbReference>
<dbReference type="RefSeq" id="WP_011365697.1">
    <property type="nucleotide sequence ID" value="NC_007517.1"/>
</dbReference>
<dbReference type="SMR" id="Q39Y10"/>
<dbReference type="STRING" id="269799.Gmet_0622"/>
<dbReference type="KEGG" id="gme:Gmet_0622"/>
<dbReference type="eggNOG" id="COG0049">
    <property type="taxonomic scope" value="Bacteria"/>
</dbReference>
<dbReference type="HOGENOM" id="CLU_072226_1_1_7"/>
<dbReference type="Proteomes" id="UP000007073">
    <property type="component" value="Chromosome"/>
</dbReference>
<dbReference type="GO" id="GO:0015935">
    <property type="term" value="C:small ribosomal subunit"/>
    <property type="evidence" value="ECO:0007669"/>
    <property type="project" value="InterPro"/>
</dbReference>
<dbReference type="GO" id="GO:0019843">
    <property type="term" value="F:rRNA binding"/>
    <property type="evidence" value="ECO:0007669"/>
    <property type="project" value="UniProtKB-UniRule"/>
</dbReference>
<dbReference type="GO" id="GO:0003735">
    <property type="term" value="F:structural constituent of ribosome"/>
    <property type="evidence" value="ECO:0007669"/>
    <property type="project" value="InterPro"/>
</dbReference>
<dbReference type="GO" id="GO:0000049">
    <property type="term" value="F:tRNA binding"/>
    <property type="evidence" value="ECO:0007669"/>
    <property type="project" value="UniProtKB-UniRule"/>
</dbReference>
<dbReference type="GO" id="GO:0006412">
    <property type="term" value="P:translation"/>
    <property type="evidence" value="ECO:0007669"/>
    <property type="project" value="UniProtKB-UniRule"/>
</dbReference>
<dbReference type="CDD" id="cd14869">
    <property type="entry name" value="uS7_Bacteria"/>
    <property type="match status" value="1"/>
</dbReference>
<dbReference type="FunFam" id="1.10.455.10:FF:000001">
    <property type="entry name" value="30S ribosomal protein S7"/>
    <property type="match status" value="1"/>
</dbReference>
<dbReference type="Gene3D" id="1.10.455.10">
    <property type="entry name" value="Ribosomal protein S7 domain"/>
    <property type="match status" value="1"/>
</dbReference>
<dbReference type="HAMAP" id="MF_00480_B">
    <property type="entry name" value="Ribosomal_uS7_B"/>
    <property type="match status" value="1"/>
</dbReference>
<dbReference type="InterPro" id="IPR000235">
    <property type="entry name" value="Ribosomal_uS7"/>
</dbReference>
<dbReference type="InterPro" id="IPR005717">
    <property type="entry name" value="Ribosomal_uS7_bac/org-type"/>
</dbReference>
<dbReference type="InterPro" id="IPR023798">
    <property type="entry name" value="Ribosomal_uS7_dom"/>
</dbReference>
<dbReference type="InterPro" id="IPR036823">
    <property type="entry name" value="Ribosomal_uS7_dom_sf"/>
</dbReference>
<dbReference type="NCBIfam" id="TIGR01029">
    <property type="entry name" value="rpsG_bact"/>
    <property type="match status" value="1"/>
</dbReference>
<dbReference type="PANTHER" id="PTHR11205">
    <property type="entry name" value="RIBOSOMAL PROTEIN S7"/>
    <property type="match status" value="1"/>
</dbReference>
<dbReference type="Pfam" id="PF00177">
    <property type="entry name" value="Ribosomal_S7"/>
    <property type="match status" value="1"/>
</dbReference>
<dbReference type="PIRSF" id="PIRSF002122">
    <property type="entry name" value="RPS7p_RPS7a_RPS5e_RPS7o"/>
    <property type="match status" value="1"/>
</dbReference>
<dbReference type="SUPFAM" id="SSF47973">
    <property type="entry name" value="Ribosomal protein S7"/>
    <property type="match status" value="1"/>
</dbReference>
<protein>
    <recommendedName>
        <fullName evidence="1">Small ribosomal subunit protein uS7</fullName>
    </recommendedName>
    <alternativeName>
        <fullName evidence="2">30S ribosomal protein S7</fullName>
    </alternativeName>
</protein>
<comment type="function">
    <text evidence="1">One of the primary rRNA binding proteins, it binds directly to 16S rRNA where it nucleates assembly of the head domain of the 30S subunit. Is located at the subunit interface close to the decoding center, probably blocks exit of the E-site tRNA.</text>
</comment>
<comment type="subunit">
    <text evidence="1">Part of the 30S ribosomal subunit. Contacts proteins S9 and S11.</text>
</comment>
<comment type="similarity">
    <text evidence="1">Belongs to the universal ribosomal protein uS7 family.</text>
</comment>
<accession>Q39Y10</accession>
<reference key="1">
    <citation type="journal article" date="2009" name="BMC Microbiol.">
        <title>The genome sequence of Geobacter metallireducens: features of metabolism, physiology and regulation common and dissimilar to Geobacter sulfurreducens.</title>
        <authorList>
            <person name="Aklujkar M."/>
            <person name="Krushkal J."/>
            <person name="DiBartolo G."/>
            <person name="Lapidus A."/>
            <person name="Land M.L."/>
            <person name="Lovley D.R."/>
        </authorList>
    </citation>
    <scope>NUCLEOTIDE SEQUENCE [LARGE SCALE GENOMIC DNA]</scope>
    <source>
        <strain>ATCC 53774 / DSM 7210 / GS-15</strain>
    </source>
</reference>
<evidence type="ECO:0000255" key="1">
    <source>
        <dbReference type="HAMAP-Rule" id="MF_00480"/>
    </source>
</evidence>
<evidence type="ECO:0000305" key="2"/>
<gene>
    <name evidence="1" type="primary">rpsG</name>
    <name type="ordered locus">Gmet_0622</name>
</gene>
<name>RS7_GEOMG</name>